<gene>
    <name type="primary">UPL6</name>
    <name type="ordered locus">At3g17205</name>
    <name type="ORF">MCE21.4</name>
    <name type="ORF">MGD8.25</name>
</gene>
<proteinExistence type="evidence at transcript level"/>
<comment type="function">
    <text evidence="1">Probable E3 ubiquitin-protein ligase which mediates ubiquitination and subsequent proteasomal degradation of target proteins.</text>
</comment>
<comment type="catalytic activity">
    <reaction>
        <text>S-ubiquitinyl-[E2 ubiquitin-conjugating enzyme]-L-cysteine + [acceptor protein]-L-lysine = [E2 ubiquitin-conjugating enzyme]-L-cysteine + N(6)-ubiquitinyl-[acceptor protein]-L-lysine.</text>
        <dbReference type="EC" id="2.3.2.26"/>
    </reaction>
</comment>
<comment type="pathway">
    <text>Protein modification; protein ubiquitination.</text>
</comment>
<comment type="alternative products">
    <event type="alternative splicing"/>
    <isoform>
        <id>Q8RWB8-1</id>
        <name>1</name>
        <sequence type="displayed"/>
    </isoform>
    <text>A number of isoforms are produced. According to EST sequences.</text>
</comment>
<comment type="similarity">
    <text evidence="5">Belongs to the UPL family.</text>
</comment>
<comment type="sequence caution" evidence="5">
    <conflict type="erroneous gene model prediction">
        <sequence resource="EMBL-CDS" id="BAB02722"/>
    </conflict>
</comment>
<dbReference type="EC" id="2.3.2.26"/>
<dbReference type="EMBL" id="AB022216">
    <property type="protein sequence ID" value="BAB02722.1"/>
    <property type="status" value="ALT_SEQ"/>
    <property type="molecule type" value="Genomic_DNA"/>
</dbReference>
<dbReference type="EMBL" id="AP000384">
    <property type="protein sequence ID" value="BAB02722.1"/>
    <property type="status" value="JOINED"/>
    <property type="molecule type" value="Genomic_DNA"/>
</dbReference>
<dbReference type="EMBL" id="CP002686">
    <property type="protein sequence ID" value="AEE75918.1"/>
    <property type="molecule type" value="Genomic_DNA"/>
</dbReference>
<dbReference type="EMBL" id="CP002686">
    <property type="protein sequence ID" value="AEE75920.1"/>
    <property type="molecule type" value="Genomic_DNA"/>
</dbReference>
<dbReference type="EMBL" id="AY093202">
    <property type="protein sequence ID" value="AAM13201.1"/>
    <property type="molecule type" value="mRNA"/>
</dbReference>
<dbReference type="EMBL" id="BT010593">
    <property type="protein sequence ID" value="AAQ89615.1"/>
    <property type="molecule type" value="mRNA"/>
</dbReference>
<dbReference type="RefSeq" id="NP_001189915.1">
    <molecule id="Q8RWB8-1"/>
    <property type="nucleotide sequence ID" value="NM_001202986.1"/>
</dbReference>
<dbReference type="RefSeq" id="NP_188346.2">
    <molecule id="Q8RWB8-1"/>
    <property type="nucleotide sequence ID" value="NM_112597.4"/>
</dbReference>
<dbReference type="SMR" id="Q8RWB8"/>
<dbReference type="BioGRID" id="6312">
    <property type="interactions" value="3"/>
</dbReference>
<dbReference type="FunCoup" id="Q8RWB8">
    <property type="interactions" value="3963"/>
</dbReference>
<dbReference type="IntAct" id="Q8RWB8">
    <property type="interactions" value="3"/>
</dbReference>
<dbReference type="STRING" id="3702.Q8RWB8"/>
<dbReference type="iPTMnet" id="Q8RWB8"/>
<dbReference type="PaxDb" id="3702-AT3G17205.1"/>
<dbReference type="ProteomicsDB" id="245281">
    <molecule id="Q8RWB8-1"/>
</dbReference>
<dbReference type="EnsemblPlants" id="AT3G17205.1">
    <molecule id="Q8RWB8-1"/>
    <property type="protein sequence ID" value="AT3G17205.1"/>
    <property type="gene ID" value="AT3G17205"/>
</dbReference>
<dbReference type="EnsemblPlants" id="AT3G17205.3">
    <molecule id="Q8RWB8-1"/>
    <property type="protein sequence ID" value="AT3G17205.3"/>
    <property type="gene ID" value="AT3G17205"/>
</dbReference>
<dbReference type="GeneID" id="820979"/>
<dbReference type="Gramene" id="AT3G17205.1">
    <molecule id="Q8RWB8-1"/>
    <property type="protein sequence ID" value="AT3G17205.1"/>
    <property type="gene ID" value="AT3G17205"/>
</dbReference>
<dbReference type="Gramene" id="AT3G17205.3">
    <molecule id="Q8RWB8-1"/>
    <property type="protein sequence ID" value="AT3G17205.3"/>
    <property type="gene ID" value="AT3G17205"/>
</dbReference>
<dbReference type="KEGG" id="ath:AT3G17205"/>
<dbReference type="Araport" id="AT3G17205"/>
<dbReference type="TAIR" id="AT3G17205">
    <property type="gene designation" value="UPL6"/>
</dbReference>
<dbReference type="eggNOG" id="KOG0942">
    <property type="taxonomic scope" value="Eukaryota"/>
</dbReference>
<dbReference type="InParanoid" id="Q8RWB8"/>
<dbReference type="OMA" id="KRCNENQ"/>
<dbReference type="OrthoDB" id="8068875at2759"/>
<dbReference type="PhylomeDB" id="Q8RWB8"/>
<dbReference type="UniPathway" id="UPA00143"/>
<dbReference type="PRO" id="PR:Q8RWB8"/>
<dbReference type="Proteomes" id="UP000006548">
    <property type="component" value="Chromosome 3"/>
</dbReference>
<dbReference type="ExpressionAtlas" id="Q8RWB8">
    <property type="expression patterns" value="baseline and differential"/>
</dbReference>
<dbReference type="GO" id="GO:0061630">
    <property type="term" value="F:ubiquitin protein ligase activity"/>
    <property type="evidence" value="ECO:0007669"/>
    <property type="project" value="InterPro"/>
</dbReference>
<dbReference type="GO" id="GO:0000209">
    <property type="term" value="P:protein polyubiquitination"/>
    <property type="evidence" value="ECO:0007669"/>
    <property type="project" value="InterPro"/>
</dbReference>
<dbReference type="CDD" id="cd00078">
    <property type="entry name" value="HECTc"/>
    <property type="match status" value="1"/>
</dbReference>
<dbReference type="FunFam" id="3.30.2160.10:FF:000002">
    <property type="entry name" value="Putative Ubiquitin-protein ligase E3C"/>
    <property type="match status" value="1"/>
</dbReference>
<dbReference type="FunFam" id="3.30.2410.10:FF:000011">
    <property type="entry name" value="Putative Ubiquitin-protein ligase E3C"/>
    <property type="match status" value="1"/>
</dbReference>
<dbReference type="Gene3D" id="3.30.2160.10">
    <property type="entry name" value="Hect, E3 ligase catalytic domain"/>
    <property type="match status" value="1"/>
</dbReference>
<dbReference type="Gene3D" id="3.30.2410.10">
    <property type="entry name" value="Hect, E3 ligase catalytic domain"/>
    <property type="match status" value="1"/>
</dbReference>
<dbReference type="Gene3D" id="3.90.1750.10">
    <property type="entry name" value="Hect, E3 ligase catalytic domains"/>
    <property type="match status" value="1"/>
</dbReference>
<dbReference type="InterPro" id="IPR044611">
    <property type="entry name" value="E3A/B/C-like"/>
</dbReference>
<dbReference type="InterPro" id="IPR000569">
    <property type="entry name" value="HECT_dom"/>
</dbReference>
<dbReference type="InterPro" id="IPR035983">
    <property type="entry name" value="Hect_E3_ubiquitin_ligase"/>
</dbReference>
<dbReference type="PANTHER" id="PTHR45700:SF6">
    <property type="entry name" value="E3 UBIQUITIN-PROTEIN LIGASE UPL6"/>
    <property type="match status" value="1"/>
</dbReference>
<dbReference type="PANTHER" id="PTHR45700">
    <property type="entry name" value="UBIQUITIN-PROTEIN LIGASE E3C"/>
    <property type="match status" value="1"/>
</dbReference>
<dbReference type="Pfam" id="PF00632">
    <property type="entry name" value="HECT"/>
    <property type="match status" value="1"/>
</dbReference>
<dbReference type="SMART" id="SM00119">
    <property type="entry name" value="HECTc"/>
    <property type="match status" value="1"/>
</dbReference>
<dbReference type="SUPFAM" id="SSF56204">
    <property type="entry name" value="Hect, E3 ligase catalytic domain"/>
    <property type="match status" value="1"/>
</dbReference>
<dbReference type="PROSITE" id="PS50237">
    <property type="entry name" value="HECT"/>
    <property type="match status" value="1"/>
</dbReference>
<dbReference type="PROSITE" id="PS50096">
    <property type="entry name" value="IQ"/>
    <property type="match status" value="1"/>
</dbReference>
<reference key="1">
    <citation type="journal article" date="2000" name="DNA Res.">
        <title>Structural analysis of Arabidopsis thaliana chromosome 3. I. Sequence features of the regions of 4,504,864 bp covered by sixty P1 and TAC clones.</title>
        <authorList>
            <person name="Sato S."/>
            <person name="Nakamura Y."/>
            <person name="Kaneko T."/>
            <person name="Katoh T."/>
            <person name="Asamizu E."/>
            <person name="Tabata S."/>
        </authorList>
    </citation>
    <scope>NUCLEOTIDE SEQUENCE [LARGE SCALE GENOMIC DNA]</scope>
    <source>
        <strain>cv. Columbia</strain>
    </source>
</reference>
<reference key="2">
    <citation type="journal article" date="2000" name="DNA Res.">
        <title>Structural analysis of Arabidopsis thaliana chromosome 3. II. Sequence features of the 4,251,695 bp regions covered by 90 P1, TAC and BAC clones.</title>
        <authorList>
            <person name="Kaneko T."/>
            <person name="Katoh T."/>
            <person name="Sato S."/>
            <person name="Nakamura Y."/>
            <person name="Asamizu E."/>
            <person name="Tabata S."/>
        </authorList>
    </citation>
    <scope>NUCLEOTIDE SEQUENCE [LARGE SCALE GENOMIC DNA]</scope>
    <source>
        <strain>cv. Columbia</strain>
    </source>
</reference>
<reference key="3">
    <citation type="journal article" date="2017" name="Plant J.">
        <title>Araport11: a complete reannotation of the Arabidopsis thaliana reference genome.</title>
        <authorList>
            <person name="Cheng C.Y."/>
            <person name="Krishnakumar V."/>
            <person name="Chan A.P."/>
            <person name="Thibaud-Nissen F."/>
            <person name="Schobel S."/>
            <person name="Town C.D."/>
        </authorList>
    </citation>
    <scope>GENOME REANNOTATION</scope>
    <source>
        <strain>cv. Columbia</strain>
    </source>
</reference>
<reference key="4">
    <citation type="journal article" date="2003" name="Science">
        <title>Empirical analysis of transcriptional activity in the Arabidopsis genome.</title>
        <authorList>
            <person name="Yamada K."/>
            <person name="Lim J."/>
            <person name="Dale J.M."/>
            <person name="Chen H."/>
            <person name="Shinn P."/>
            <person name="Palm C.J."/>
            <person name="Southwick A.M."/>
            <person name="Wu H.C."/>
            <person name="Kim C.J."/>
            <person name="Nguyen M."/>
            <person name="Pham P.K."/>
            <person name="Cheuk R.F."/>
            <person name="Karlin-Newmann G."/>
            <person name="Liu S.X."/>
            <person name="Lam B."/>
            <person name="Sakano H."/>
            <person name="Wu T."/>
            <person name="Yu G."/>
            <person name="Miranda M."/>
            <person name="Quach H.L."/>
            <person name="Tripp M."/>
            <person name="Chang C.H."/>
            <person name="Lee J.M."/>
            <person name="Toriumi M.J."/>
            <person name="Chan M.M."/>
            <person name="Tang C.C."/>
            <person name="Onodera C.S."/>
            <person name="Deng J.M."/>
            <person name="Akiyama K."/>
            <person name="Ansari Y."/>
            <person name="Arakawa T."/>
            <person name="Banh J."/>
            <person name="Banno F."/>
            <person name="Bowser L."/>
            <person name="Brooks S.Y."/>
            <person name="Carninci P."/>
            <person name="Chao Q."/>
            <person name="Choy N."/>
            <person name="Enju A."/>
            <person name="Goldsmith A.D."/>
            <person name="Gurjal M."/>
            <person name="Hansen N.F."/>
            <person name="Hayashizaki Y."/>
            <person name="Johnson-Hopson C."/>
            <person name="Hsuan V.W."/>
            <person name="Iida K."/>
            <person name="Karnes M."/>
            <person name="Khan S."/>
            <person name="Koesema E."/>
            <person name="Ishida J."/>
            <person name="Jiang P.X."/>
            <person name="Jones T."/>
            <person name="Kawai J."/>
            <person name="Kamiya A."/>
            <person name="Meyers C."/>
            <person name="Nakajima M."/>
            <person name="Narusaka M."/>
            <person name="Seki M."/>
            <person name="Sakurai T."/>
            <person name="Satou M."/>
            <person name="Tamse R."/>
            <person name="Vaysberg M."/>
            <person name="Wallender E.K."/>
            <person name="Wong C."/>
            <person name="Yamamura Y."/>
            <person name="Yuan S."/>
            <person name="Shinozaki K."/>
            <person name="Davis R.W."/>
            <person name="Theologis A."/>
            <person name="Ecker J.R."/>
        </authorList>
    </citation>
    <scope>NUCLEOTIDE SEQUENCE [LARGE SCALE MRNA]</scope>
    <source>
        <strain>cv. Columbia</strain>
    </source>
</reference>
<reference key="5">
    <citation type="submission" date="2003-10" db="EMBL/GenBank/DDBJ databases">
        <title>Arabidopsis ORF clones.</title>
        <authorList>
            <person name="Cheuk R.F."/>
            <person name="Chen H."/>
            <person name="Kim C.J."/>
            <person name="Shinn P."/>
            <person name="Carninci P."/>
            <person name="Hayashizaki Y."/>
            <person name="Ishida J."/>
            <person name="Kamiya A."/>
            <person name="Kawai J."/>
            <person name="Narusaka M."/>
            <person name="Sakurai T."/>
            <person name="Satou M."/>
            <person name="Seki M."/>
            <person name="Shinozaki K."/>
            <person name="Ecker J.R."/>
        </authorList>
    </citation>
    <scope>NUCLEOTIDE SEQUENCE [LARGE SCALE MRNA]</scope>
    <source>
        <strain>cv. Columbia</strain>
    </source>
</reference>
<protein>
    <recommendedName>
        <fullName>E3 ubiquitin-protein ligase UPL6</fullName>
        <shortName>Ubiquitin-protein ligase 6</shortName>
        <ecNumber>2.3.2.26</ecNumber>
    </recommendedName>
    <alternativeName>
        <fullName>HECT-type E3 ubiquitin transferase UPL6</fullName>
    </alternativeName>
</protein>
<evidence type="ECO:0000250" key="1"/>
<evidence type="ECO:0000255" key="2">
    <source>
        <dbReference type="PROSITE-ProRule" id="PRU00104"/>
    </source>
</evidence>
<evidence type="ECO:0000255" key="3">
    <source>
        <dbReference type="PROSITE-ProRule" id="PRU00116"/>
    </source>
</evidence>
<evidence type="ECO:0000256" key="4">
    <source>
        <dbReference type="SAM" id="MobiDB-lite"/>
    </source>
</evidence>
<evidence type="ECO:0000305" key="5"/>
<feature type="chain" id="PRO_0000312024" description="E3 ubiquitin-protein ligase UPL6">
    <location>
        <begin position="1"/>
        <end position="1029"/>
    </location>
</feature>
<feature type="domain" description="IQ" evidence="3">
    <location>
        <begin position="45"/>
        <end position="74"/>
    </location>
</feature>
<feature type="domain" description="HECT" evidence="2">
    <location>
        <begin position="688"/>
        <end position="1029"/>
    </location>
</feature>
<feature type="region of interest" description="Disordered" evidence="4">
    <location>
        <begin position="1"/>
        <end position="20"/>
    </location>
</feature>
<feature type="compositionally biased region" description="Basic and acidic residues" evidence="4">
    <location>
        <begin position="8"/>
        <end position="20"/>
    </location>
</feature>
<feature type="active site" description="Glycyl thioester intermediate" evidence="2">
    <location>
        <position position="997"/>
    </location>
</feature>
<organism>
    <name type="scientific">Arabidopsis thaliana</name>
    <name type="common">Mouse-ear cress</name>
    <dbReference type="NCBI Taxonomy" id="3702"/>
    <lineage>
        <taxon>Eukaryota</taxon>
        <taxon>Viridiplantae</taxon>
        <taxon>Streptophyta</taxon>
        <taxon>Embryophyta</taxon>
        <taxon>Tracheophyta</taxon>
        <taxon>Spermatophyta</taxon>
        <taxon>Magnoliopsida</taxon>
        <taxon>eudicotyledons</taxon>
        <taxon>Gunneridae</taxon>
        <taxon>Pentapetalae</taxon>
        <taxon>rosids</taxon>
        <taxon>malvids</taxon>
        <taxon>Brassicales</taxon>
        <taxon>Brassicaceae</taxon>
        <taxon>Camelineae</taxon>
        <taxon>Arabidopsis</taxon>
    </lineage>
</organism>
<keyword id="KW-0025">Alternative splicing</keyword>
<keyword id="KW-1185">Reference proteome</keyword>
<keyword id="KW-0808">Transferase</keyword>
<keyword id="KW-0833">Ubl conjugation pathway</keyword>
<name>UPL6_ARATH</name>
<sequence length="1029" mass="117662">MFFSGDPSTRKRVDLGGRSTKERDARKLLEQTRMERNRRLLQKQQNSAALKIQKFFRGRRSMAIERSKVRHDFCETYGNNCQNVDRHCFEPGSSFLRQFLFFFKAQNSGDFVILVETCRLLQSFVDSSGDIVSLFSGLDYSSEHNLVDFRVKKLAFTCIEAIHQNRNRLRDQLLVTPEEASISTAILMEAVSLLLDPKLPWVCKIVSYLQKRKVFKLVREMVTTAKESPRGKTMTGNILSLERVLILIVPHIGREPCCCTVVDPRWSFSSMILTIPLIWKLFPNLKVVFANPSLSQHYIHQMASCIQKDTCVLPMETSPEFPGYACLLGNTLDTANVVLSQPECSLDMAIDIALVATFFLETLPPVKSSEGESRQGSSDEDDMLIDDVPGLVLNKALEQQITNAIDSRFLLQLTNVLFRQVSLGMQSYDEDKEALAIGTASSFLYAAFNTLPLERIMTILAYRTELVAVLWNYMKRCHENQKWSSMPKLLAYLPGDAPGWLLPLVVFCPVYKHMLMIVDNEEFYEREKPLSLQDIRLLIIILKQALWQLLWVNPLTQPNTGKSVSNDLSKKNPIELIQNRMGIVVSELLSQLQDWNNRKQFTSSSDFQADSVNEYFISQAIMEGTRANYILMQAPFLIPFTSRVKIFTTQLATARQSHGSQGIFARNRFRIRRDHILEDAYNQMSALSEDDLRSSIRVTFVNELGVEEAGIDGGGIFKDFMEKITRAAFDVQYGLFKETADHMLYPNPGSGMIHEQHLQFFHFLGSLLAKAMFEGILVDIPFATFFLSKLKQKYNYLNDLPSLDPELYRHLIFLKRYKGDISDLELYFVILNNEYGERTEEELLPGGQDMRVTNENVITFIHLVSNHRLNFQIRQQSSHFLRGFQQLIPKEWIDMFNEHELQVLISGSVDSLDIDDLRNNTNYAGGYHAGHYVIDMFWEVMKSFSTENQKKFLKFVTGCSRGPLLGFKYLEPAFCIQRAAGSASNESVDRLPTSATCMNLLKLPPYQSKELLETKLMYAISAEAGFDLS</sequence>
<accession>Q8RWB8</accession>
<accession>Q9LUV3</accession>